<reference key="1">
    <citation type="journal article" date="2006" name="J. Bacteriol.">
        <title>The Methanosarcina barkeri genome: comparative analysis with Methanosarcina acetivorans and Methanosarcina mazei reveals extensive rearrangement within methanosarcinal genomes.</title>
        <authorList>
            <person name="Maeder D.L."/>
            <person name="Anderson I."/>
            <person name="Brettin T.S."/>
            <person name="Bruce D.C."/>
            <person name="Gilna P."/>
            <person name="Han C.S."/>
            <person name="Lapidus A."/>
            <person name="Metcalf W.W."/>
            <person name="Saunders E."/>
            <person name="Tapia R."/>
            <person name="Sowers K.R."/>
        </authorList>
    </citation>
    <scope>NUCLEOTIDE SEQUENCE [LARGE SCALE GENOMIC DNA]</scope>
    <source>
        <strain>Fusaro / DSM 804</strain>
    </source>
</reference>
<dbReference type="EMBL" id="CP000099">
    <property type="protein sequence ID" value="AAZ69063.1"/>
    <property type="molecule type" value="Genomic_DNA"/>
</dbReference>
<dbReference type="SMR" id="Q46GC9"/>
<dbReference type="STRING" id="269797.Mbar_A0076"/>
<dbReference type="PaxDb" id="269797-Mbar_A0076"/>
<dbReference type="KEGG" id="mba:Mbar_A0076"/>
<dbReference type="eggNOG" id="arCOG04240">
    <property type="taxonomic scope" value="Archaea"/>
</dbReference>
<dbReference type="HOGENOM" id="CLU_072439_6_1_2"/>
<dbReference type="OrthoDB" id="12054at2157"/>
<dbReference type="GO" id="GO:1990904">
    <property type="term" value="C:ribonucleoprotein complex"/>
    <property type="evidence" value="ECO:0007669"/>
    <property type="project" value="UniProtKB-KW"/>
</dbReference>
<dbReference type="GO" id="GO:0005840">
    <property type="term" value="C:ribosome"/>
    <property type="evidence" value="ECO:0007669"/>
    <property type="project" value="UniProtKB-KW"/>
</dbReference>
<dbReference type="GO" id="GO:0019843">
    <property type="term" value="F:rRNA binding"/>
    <property type="evidence" value="ECO:0007669"/>
    <property type="project" value="UniProtKB-UniRule"/>
</dbReference>
<dbReference type="GO" id="GO:0003735">
    <property type="term" value="F:structural constituent of ribosome"/>
    <property type="evidence" value="ECO:0007669"/>
    <property type="project" value="InterPro"/>
</dbReference>
<dbReference type="GO" id="GO:0006412">
    <property type="term" value="P:translation"/>
    <property type="evidence" value="ECO:0007669"/>
    <property type="project" value="UniProtKB-UniRule"/>
</dbReference>
<dbReference type="FunFam" id="3.30.420.80:FF:000007">
    <property type="entry name" value="30S ribosomal protein S11"/>
    <property type="match status" value="1"/>
</dbReference>
<dbReference type="Gene3D" id="3.30.420.80">
    <property type="entry name" value="Ribosomal protein S11"/>
    <property type="match status" value="1"/>
</dbReference>
<dbReference type="HAMAP" id="MF_01310">
    <property type="entry name" value="Ribosomal_uS11"/>
    <property type="match status" value="1"/>
</dbReference>
<dbReference type="InterPro" id="IPR001971">
    <property type="entry name" value="Ribosomal_uS11"/>
</dbReference>
<dbReference type="InterPro" id="IPR019961">
    <property type="entry name" value="Ribosomal_uS11_archaeal"/>
</dbReference>
<dbReference type="InterPro" id="IPR018102">
    <property type="entry name" value="Ribosomal_uS11_CS"/>
</dbReference>
<dbReference type="InterPro" id="IPR036967">
    <property type="entry name" value="Ribosomal_uS11_sf"/>
</dbReference>
<dbReference type="NCBIfam" id="TIGR03628">
    <property type="entry name" value="arch_S11P"/>
    <property type="match status" value="1"/>
</dbReference>
<dbReference type="NCBIfam" id="NF007176">
    <property type="entry name" value="PRK09607.1"/>
    <property type="match status" value="1"/>
</dbReference>
<dbReference type="PANTHER" id="PTHR11759">
    <property type="entry name" value="40S RIBOSOMAL PROTEIN S14/30S RIBOSOMAL PROTEIN S11"/>
    <property type="match status" value="1"/>
</dbReference>
<dbReference type="Pfam" id="PF00411">
    <property type="entry name" value="Ribosomal_S11"/>
    <property type="match status" value="1"/>
</dbReference>
<dbReference type="PIRSF" id="PIRSF002131">
    <property type="entry name" value="Ribosomal_S11"/>
    <property type="match status" value="1"/>
</dbReference>
<dbReference type="SUPFAM" id="SSF53137">
    <property type="entry name" value="Translational machinery components"/>
    <property type="match status" value="1"/>
</dbReference>
<dbReference type="PROSITE" id="PS00054">
    <property type="entry name" value="RIBOSOMAL_S11"/>
    <property type="match status" value="1"/>
</dbReference>
<gene>
    <name evidence="1" type="primary">rps11</name>
    <name type="ordered locus">Mbar_A0076</name>
</gene>
<evidence type="ECO:0000255" key="1">
    <source>
        <dbReference type="HAMAP-Rule" id="MF_01310"/>
    </source>
</evidence>
<evidence type="ECO:0000305" key="2"/>
<protein>
    <recommendedName>
        <fullName evidence="1">Small ribosomal subunit protein uS11</fullName>
    </recommendedName>
    <alternativeName>
        <fullName evidence="2">30S ribosomal protein S11</fullName>
    </alternativeName>
</protein>
<sequence>MADMKWAVAHIKSSFNNTIITVTDITGAETIAKSSGGMVVKAARDESSPYTAMQMAGQLADQLRDKGIHGIHIRVRAPGGNKQRSPGPGAQAAIRAFARAGIRIGRIEDVTPVPHDGTRPKGGRRV</sequence>
<proteinExistence type="inferred from homology"/>
<accession>Q46GC9</accession>
<comment type="function">
    <text evidence="1">Located on the platform of the 30S subunit.</text>
</comment>
<comment type="subunit">
    <text evidence="1">Part of the 30S ribosomal subunit.</text>
</comment>
<comment type="similarity">
    <text evidence="1">Belongs to the universal ribosomal protein uS11 family.</text>
</comment>
<organism>
    <name type="scientific">Methanosarcina barkeri (strain Fusaro / DSM 804)</name>
    <dbReference type="NCBI Taxonomy" id="269797"/>
    <lineage>
        <taxon>Archaea</taxon>
        <taxon>Methanobacteriati</taxon>
        <taxon>Methanobacteriota</taxon>
        <taxon>Stenosarchaea group</taxon>
        <taxon>Methanomicrobia</taxon>
        <taxon>Methanosarcinales</taxon>
        <taxon>Methanosarcinaceae</taxon>
        <taxon>Methanosarcina</taxon>
    </lineage>
</organism>
<feature type="chain" id="PRO_0000230444" description="Small ribosomal subunit protein uS11">
    <location>
        <begin position="1"/>
        <end position="126"/>
    </location>
</feature>
<name>RS11_METBF</name>
<keyword id="KW-0687">Ribonucleoprotein</keyword>
<keyword id="KW-0689">Ribosomal protein</keyword>
<keyword id="KW-0694">RNA-binding</keyword>
<keyword id="KW-0699">rRNA-binding</keyword>